<evidence type="ECO:0000255" key="1">
    <source>
        <dbReference type="HAMAP-Rule" id="MF_00191"/>
    </source>
</evidence>
<proteinExistence type="inferred from homology"/>
<gene>
    <name evidence="1" type="primary">ispH</name>
    <name type="ordered locus">VSAL_I0583</name>
</gene>
<reference key="1">
    <citation type="journal article" date="2008" name="BMC Genomics">
        <title>The genome sequence of the fish pathogen Aliivibrio salmonicida strain LFI1238 shows extensive evidence of gene decay.</title>
        <authorList>
            <person name="Hjerde E."/>
            <person name="Lorentzen M.S."/>
            <person name="Holden M.T."/>
            <person name="Seeger K."/>
            <person name="Paulsen S."/>
            <person name="Bason N."/>
            <person name="Churcher C."/>
            <person name="Harris D."/>
            <person name="Norbertczak H."/>
            <person name="Quail M.A."/>
            <person name="Sanders S."/>
            <person name="Thurston S."/>
            <person name="Parkhill J."/>
            <person name="Willassen N.P."/>
            <person name="Thomson N.R."/>
        </authorList>
    </citation>
    <scope>NUCLEOTIDE SEQUENCE [LARGE SCALE GENOMIC DNA]</scope>
    <source>
        <strain>LFI1238</strain>
    </source>
</reference>
<dbReference type="EC" id="1.17.7.4" evidence="1"/>
<dbReference type="EMBL" id="FM178379">
    <property type="protein sequence ID" value="CAQ78268.1"/>
    <property type="molecule type" value="Genomic_DNA"/>
</dbReference>
<dbReference type="RefSeq" id="WP_012549391.1">
    <property type="nucleotide sequence ID" value="NC_011312.1"/>
</dbReference>
<dbReference type="SMR" id="B6ENC7"/>
<dbReference type="KEGG" id="vsa:VSAL_I0583"/>
<dbReference type="eggNOG" id="COG0761">
    <property type="taxonomic scope" value="Bacteria"/>
</dbReference>
<dbReference type="HOGENOM" id="CLU_027486_1_0_6"/>
<dbReference type="UniPathway" id="UPA00056">
    <property type="reaction ID" value="UER00097"/>
</dbReference>
<dbReference type="UniPathway" id="UPA00059">
    <property type="reaction ID" value="UER00105"/>
</dbReference>
<dbReference type="Proteomes" id="UP000001730">
    <property type="component" value="Chromosome 1"/>
</dbReference>
<dbReference type="GO" id="GO:0051539">
    <property type="term" value="F:4 iron, 4 sulfur cluster binding"/>
    <property type="evidence" value="ECO:0007669"/>
    <property type="project" value="UniProtKB-UniRule"/>
</dbReference>
<dbReference type="GO" id="GO:0051745">
    <property type="term" value="F:4-hydroxy-3-methylbut-2-enyl diphosphate reductase activity"/>
    <property type="evidence" value="ECO:0007669"/>
    <property type="project" value="UniProtKB-UniRule"/>
</dbReference>
<dbReference type="GO" id="GO:0046872">
    <property type="term" value="F:metal ion binding"/>
    <property type="evidence" value="ECO:0007669"/>
    <property type="project" value="UniProtKB-KW"/>
</dbReference>
<dbReference type="GO" id="GO:0050992">
    <property type="term" value="P:dimethylallyl diphosphate biosynthetic process"/>
    <property type="evidence" value="ECO:0007669"/>
    <property type="project" value="UniProtKB-UniRule"/>
</dbReference>
<dbReference type="GO" id="GO:0019288">
    <property type="term" value="P:isopentenyl diphosphate biosynthetic process, methylerythritol 4-phosphate pathway"/>
    <property type="evidence" value="ECO:0007669"/>
    <property type="project" value="UniProtKB-UniRule"/>
</dbReference>
<dbReference type="GO" id="GO:0016114">
    <property type="term" value="P:terpenoid biosynthetic process"/>
    <property type="evidence" value="ECO:0007669"/>
    <property type="project" value="UniProtKB-UniRule"/>
</dbReference>
<dbReference type="CDD" id="cd13944">
    <property type="entry name" value="lytB_ispH"/>
    <property type="match status" value="1"/>
</dbReference>
<dbReference type="FunFam" id="3.40.50.11270:FF:000001">
    <property type="entry name" value="4-hydroxy-3-methylbut-2-enyl diphosphate reductase"/>
    <property type="match status" value="1"/>
</dbReference>
<dbReference type="Gene3D" id="3.40.50.11270">
    <property type="match status" value="1"/>
</dbReference>
<dbReference type="Gene3D" id="3.40.1010.20">
    <property type="entry name" value="4-hydroxy-3-methylbut-2-enyl diphosphate reductase, catalytic domain"/>
    <property type="match status" value="2"/>
</dbReference>
<dbReference type="HAMAP" id="MF_00191">
    <property type="entry name" value="IspH"/>
    <property type="match status" value="1"/>
</dbReference>
<dbReference type="InterPro" id="IPR003451">
    <property type="entry name" value="LytB/IspH"/>
</dbReference>
<dbReference type="NCBIfam" id="TIGR00216">
    <property type="entry name" value="ispH_lytB"/>
    <property type="match status" value="1"/>
</dbReference>
<dbReference type="NCBIfam" id="NF002188">
    <property type="entry name" value="PRK01045.1-2"/>
    <property type="match status" value="1"/>
</dbReference>
<dbReference type="NCBIfam" id="NF002190">
    <property type="entry name" value="PRK01045.1-4"/>
    <property type="match status" value="1"/>
</dbReference>
<dbReference type="PANTHER" id="PTHR30426">
    <property type="entry name" value="4-HYDROXY-3-METHYLBUT-2-ENYL DIPHOSPHATE REDUCTASE"/>
    <property type="match status" value="1"/>
</dbReference>
<dbReference type="PANTHER" id="PTHR30426:SF0">
    <property type="entry name" value="4-HYDROXY-3-METHYLBUT-2-ENYL DIPHOSPHATE REDUCTASE"/>
    <property type="match status" value="1"/>
</dbReference>
<dbReference type="Pfam" id="PF02401">
    <property type="entry name" value="LYTB"/>
    <property type="match status" value="1"/>
</dbReference>
<sequence length="314" mass="34765">MKIVLANPRGFCAGVDRAISIVERALELYKAPIYVRHEVVHNRFVVEGLKQRGAIFVEELSEVPDDNIVIFSAHGVSQAVRTEAKERALTVFDATCPLVTKVHMEVARASKKSIEVVLIGHAGHPEVEGTMGQYASEAGGMYLVETPEDVEKLIVQDPNNLHYVSQTTLSVDETADVIDELRRVFPKIQGPRKDDICYATQNRQDAVRDMAGQVDVMIVVGSKNSSNSNRLRELSEKLGTTSYLIDCPEELKEEWLTNQAKVGVTAGASAPEELVNQIIEQVKVFGGTTVDELKGREENMFFEVPKELQIKTVS</sequence>
<feature type="chain" id="PRO_1000098930" description="4-hydroxy-3-methylbut-2-enyl diphosphate reductase">
    <location>
        <begin position="1"/>
        <end position="314"/>
    </location>
</feature>
<feature type="active site" description="Proton donor" evidence="1">
    <location>
        <position position="126"/>
    </location>
</feature>
<feature type="binding site" evidence="1">
    <location>
        <position position="12"/>
    </location>
    <ligand>
        <name>[4Fe-4S] cluster</name>
        <dbReference type="ChEBI" id="CHEBI:49883"/>
    </ligand>
</feature>
<feature type="binding site" evidence="1">
    <location>
        <position position="41"/>
    </location>
    <ligand>
        <name>(2E)-4-hydroxy-3-methylbut-2-enyl diphosphate</name>
        <dbReference type="ChEBI" id="CHEBI:128753"/>
    </ligand>
</feature>
<feature type="binding site" evidence="1">
    <location>
        <position position="41"/>
    </location>
    <ligand>
        <name>dimethylallyl diphosphate</name>
        <dbReference type="ChEBI" id="CHEBI:57623"/>
    </ligand>
</feature>
<feature type="binding site" evidence="1">
    <location>
        <position position="41"/>
    </location>
    <ligand>
        <name>isopentenyl diphosphate</name>
        <dbReference type="ChEBI" id="CHEBI:128769"/>
    </ligand>
</feature>
<feature type="binding site" evidence="1">
    <location>
        <position position="74"/>
    </location>
    <ligand>
        <name>(2E)-4-hydroxy-3-methylbut-2-enyl diphosphate</name>
        <dbReference type="ChEBI" id="CHEBI:128753"/>
    </ligand>
</feature>
<feature type="binding site" evidence="1">
    <location>
        <position position="74"/>
    </location>
    <ligand>
        <name>dimethylallyl diphosphate</name>
        <dbReference type="ChEBI" id="CHEBI:57623"/>
    </ligand>
</feature>
<feature type="binding site" evidence="1">
    <location>
        <position position="74"/>
    </location>
    <ligand>
        <name>isopentenyl diphosphate</name>
        <dbReference type="ChEBI" id="CHEBI:128769"/>
    </ligand>
</feature>
<feature type="binding site" evidence="1">
    <location>
        <position position="96"/>
    </location>
    <ligand>
        <name>[4Fe-4S] cluster</name>
        <dbReference type="ChEBI" id="CHEBI:49883"/>
    </ligand>
</feature>
<feature type="binding site" evidence="1">
    <location>
        <position position="124"/>
    </location>
    <ligand>
        <name>(2E)-4-hydroxy-3-methylbut-2-enyl diphosphate</name>
        <dbReference type="ChEBI" id="CHEBI:128753"/>
    </ligand>
</feature>
<feature type="binding site" evidence="1">
    <location>
        <position position="124"/>
    </location>
    <ligand>
        <name>dimethylallyl diphosphate</name>
        <dbReference type="ChEBI" id="CHEBI:57623"/>
    </ligand>
</feature>
<feature type="binding site" evidence="1">
    <location>
        <position position="124"/>
    </location>
    <ligand>
        <name>isopentenyl diphosphate</name>
        <dbReference type="ChEBI" id="CHEBI:128769"/>
    </ligand>
</feature>
<feature type="binding site" evidence="1">
    <location>
        <position position="167"/>
    </location>
    <ligand>
        <name>(2E)-4-hydroxy-3-methylbut-2-enyl diphosphate</name>
        <dbReference type="ChEBI" id="CHEBI:128753"/>
    </ligand>
</feature>
<feature type="binding site" evidence="1">
    <location>
        <position position="197"/>
    </location>
    <ligand>
        <name>[4Fe-4S] cluster</name>
        <dbReference type="ChEBI" id="CHEBI:49883"/>
    </ligand>
</feature>
<feature type="binding site" evidence="1">
    <location>
        <position position="225"/>
    </location>
    <ligand>
        <name>(2E)-4-hydroxy-3-methylbut-2-enyl diphosphate</name>
        <dbReference type="ChEBI" id="CHEBI:128753"/>
    </ligand>
</feature>
<feature type="binding site" evidence="1">
    <location>
        <position position="225"/>
    </location>
    <ligand>
        <name>dimethylallyl diphosphate</name>
        <dbReference type="ChEBI" id="CHEBI:57623"/>
    </ligand>
</feature>
<feature type="binding site" evidence="1">
    <location>
        <position position="225"/>
    </location>
    <ligand>
        <name>isopentenyl diphosphate</name>
        <dbReference type="ChEBI" id="CHEBI:128769"/>
    </ligand>
</feature>
<feature type="binding site" evidence="1">
    <location>
        <position position="226"/>
    </location>
    <ligand>
        <name>(2E)-4-hydroxy-3-methylbut-2-enyl diphosphate</name>
        <dbReference type="ChEBI" id="CHEBI:128753"/>
    </ligand>
</feature>
<feature type="binding site" evidence="1">
    <location>
        <position position="226"/>
    </location>
    <ligand>
        <name>dimethylallyl diphosphate</name>
        <dbReference type="ChEBI" id="CHEBI:57623"/>
    </ligand>
</feature>
<feature type="binding site" evidence="1">
    <location>
        <position position="226"/>
    </location>
    <ligand>
        <name>isopentenyl diphosphate</name>
        <dbReference type="ChEBI" id="CHEBI:128769"/>
    </ligand>
</feature>
<feature type="binding site" evidence="1">
    <location>
        <position position="227"/>
    </location>
    <ligand>
        <name>(2E)-4-hydroxy-3-methylbut-2-enyl diphosphate</name>
        <dbReference type="ChEBI" id="CHEBI:128753"/>
    </ligand>
</feature>
<feature type="binding site" evidence="1">
    <location>
        <position position="227"/>
    </location>
    <ligand>
        <name>dimethylallyl diphosphate</name>
        <dbReference type="ChEBI" id="CHEBI:57623"/>
    </ligand>
</feature>
<feature type="binding site" evidence="1">
    <location>
        <position position="227"/>
    </location>
    <ligand>
        <name>isopentenyl diphosphate</name>
        <dbReference type="ChEBI" id="CHEBI:128769"/>
    </ligand>
</feature>
<feature type="binding site" evidence="1">
    <location>
        <position position="269"/>
    </location>
    <ligand>
        <name>(2E)-4-hydroxy-3-methylbut-2-enyl diphosphate</name>
        <dbReference type="ChEBI" id="CHEBI:128753"/>
    </ligand>
</feature>
<feature type="binding site" evidence="1">
    <location>
        <position position="269"/>
    </location>
    <ligand>
        <name>dimethylallyl diphosphate</name>
        <dbReference type="ChEBI" id="CHEBI:57623"/>
    </ligand>
</feature>
<feature type="binding site" evidence="1">
    <location>
        <position position="269"/>
    </location>
    <ligand>
        <name>isopentenyl diphosphate</name>
        <dbReference type="ChEBI" id="CHEBI:128769"/>
    </ligand>
</feature>
<organism>
    <name type="scientific">Aliivibrio salmonicida (strain LFI1238)</name>
    <name type="common">Vibrio salmonicida (strain LFI1238)</name>
    <dbReference type="NCBI Taxonomy" id="316275"/>
    <lineage>
        <taxon>Bacteria</taxon>
        <taxon>Pseudomonadati</taxon>
        <taxon>Pseudomonadota</taxon>
        <taxon>Gammaproteobacteria</taxon>
        <taxon>Vibrionales</taxon>
        <taxon>Vibrionaceae</taxon>
        <taxon>Aliivibrio</taxon>
    </lineage>
</organism>
<protein>
    <recommendedName>
        <fullName evidence="1">4-hydroxy-3-methylbut-2-enyl diphosphate reductase</fullName>
        <shortName evidence="1">HMBPP reductase</shortName>
        <ecNumber evidence="1">1.17.7.4</ecNumber>
    </recommendedName>
</protein>
<name>ISPH_ALISL</name>
<keyword id="KW-0004">4Fe-4S</keyword>
<keyword id="KW-0408">Iron</keyword>
<keyword id="KW-0411">Iron-sulfur</keyword>
<keyword id="KW-0414">Isoprene biosynthesis</keyword>
<keyword id="KW-0479">Metal-binding</keyword>
<keyword id="KW-0560">Oxidoreductase</keyword>
<comment type="function">
    <text evidence="1">Catalyzes the conversion of 1-hydroxy-2-methyl-2-(E)-butenyl 4-diphosphate (HMBPP) into a mixture of isopentenyl diphosphate (IPP) and dimethylallyl diphosphate (DMAPP). Acts in the terminal step of the DOXP/MEP pathway for isoprenoid precursor biosynthesis.</text>
</comment>
<comment type="catalytic activity">
    <reaction evidence="1">
        <text>isopentenyl diphosphate + 2 oxidized [2Fe-2S]-[ferredoxin] + H2O = (2E)-4-hydroxy-3-methylbut-2-enyl diphosphate + 2 reduced [2Fe-2S]-[ferredoxin] + 2 H(+)</text>
        <dbReference type="Rhea" id="RHEA:24488"/>
        <dbReference type="Rhea" id="RHEA-COMP:10000"/>
        <dbReference type="Rhea" id="RHEA-COMP:10001"/>
        <dbReference type="ChEBI" id="CHEBI:15377"/>
        <dbReference type="ChEBI" id="CHEBI:15378"/>
        <dbReference type="ChEBI" id="CHEBI:33737"/>
        <dbReference type="ChEBI" id="CHEBI:33738"/>
        <dbReference type="ChEBI" id="CHEBI:128753"/>
        <dbReference type="ChEBI" id="CHEBI:128769"/>
        <dbReference type="EC" id="1.17.7.4"/>
    </reaction>
</comment>
<comment type="catalytic activity">
    <reaction evidence="1">
        <text>dimethylallyl diphosphate + 2 oxidized [2Fe-2S]-[ferredoxin] + H2O = (2E)-4-hydroxy-3-methylbut-2-enyl diphosphate + 2 reduced [2Fe-2S]-[ferredoxin] + 2 H(+)</text>
        <dbReference type="Rhea" id="RHEA:24825"/>
        <dbReference type="Rhea" id="RHEA-COMP:10000"/>
        <dbReference type="Rhea" id="RHEA-COMP:10001"/>
        <dbReference type="ChEBI" id="CHEBI:15377"/>
        <dbReference type="ChEBI" id="CHEBI:15378"/>
        <dbReference type="ChEBI" id="CHEBI:33737"/>
        <dbReference type="ChEBI" id="CHEBI:33738"/>
        <dbReference type="ChEBI" id="CHEBI:57623"/>
        <dbReference type="ChEBI" id="CHEBI:128753"/>
        <dbReference type="EC" id="1.17.7.4"/>
    </reaction>
</comment>
<comment type="cofactor">
    <cofactor evidence="1">
        <name>[4Fe-4S] cluster</name>
        <dbReference type="ChEBI" id="CHEBI:49883"/>
    </cofactor>
    <text evidence="1">Binds 1 [4Fe-4S] cluster per subunit.</text>
</comment>
<comment type="pathway">
    <text evidence="1">Isoprenoid biosynthesis; dimethylallyl diphosphate biosynthesis; dimethylallyl diphosphate from (2E)-4-hydroxy-3-methylbutenyl diphosphate: step 1/1.</text>
</comment>
<comment type="pathway">
    <text evidence="1">Isoprenoid biosynthesis; isopentenyl diphosphate biosynthesis via DXP pathway; isopentenyl diphosphate from 1-deoxy-D-xylulose 5-phosphate: step 6/6.</text>
</comment>
<comment type="similarity">
    <text evidence="1">Belongs to the IspH family.</text>
</comment>
<accession>B6ENC7</accession>